<evidence type="ECO:0000255" key="1">
    <source>
        <dbReference type="HAMAP-Rule" id="MF_00459"/>
    </source>
</evidence>
<feature type="chain" id="PRO_1000013544" description="Ion-translocating oxidoreductase complex subunit A">
    <location>
        <begin position="1"/>
        <end position="193"/>
    </location>
</feature>
<feature type="transmembrane region" description="Helical" evidence="1">
    <location>
        <begin position="5"/>
        <end position="25"/>
    </location>
</feature>
<feature type="transmembrane region" description="Helical" evidence="1">
    <location>
        <begin position="47"/>
        <end position="67"/>
    </location>
</feature>
<feature type="transmembrane region" description="Helical" evidence="1">
    <location>
        <begin position="72"/>
        <end position="92"/>
    </location>
</feature>
<feature type="transmembrane region" description="Helical" evidence="1">
    <location>
        <begin position="102"/>
        <end position="122"/>
    </location>
</feature>
<feature type="transmembrane region" description="Helical" evidence="1">
    <location>
        <begin position="134"/>
        <end position="154"/>
    </location>
</feature>
<feature type="transmembrane region" description="Helical" evidence="1">
    <location>
        <begin position="171"/>
        <end position="191"/>
    </location>
</feature>
<reference key="1">
    <citation type="journal article" date="2005" name="Nucleic Acids Res.">
        <title>The genome sequence of Salmonella enterica serovar Choleraesuis, a highly invasive and resistant zoonotic pathogen.</title>
        <authorList>
            <person name="Chiu C.-H."/>
            <person name="Tang P."/>
            <person name="Chu C."/>
            <person name="Hu S."/>
            <person name="Bao Q."/>
            <person name="Yu J."/>
            <person name="Chou Y.-Y."/>
            <person name="Wang H.-S."/>
            <person name="Lee Y.-S."/>
        </authorList>
    </citation>
    <scope>NUCLEOTIDE SEQUENCE [LARGE SCALE GENOMIC DNA]</scope>
    <source>
        <strain>SC-B67</strain>
    </source>
</reference>
<dbReference type="EC" id="7.-.-.-" evidence="1"/>
<dbReference type="EMBL" id="AE017220">
    <property type="protein sequence ID" value="AAX65383.1"/>
    <property type="molecule type" value="Genomic_DNA"/>
</dbReference>
<dbReference type="RefSeq" id="WP_000133179.1">
    <property type="nucleotide sequence ID" value="NC_006905.1"/>
</dbReference>
<dbReference type="SMR" id="Q57PH8"/>
<dbReference type="GeneID" id="66755900"/>
<dbReference type="KEGG" id="sec:SCH_1477"/>
<dbReference type="HOGENOM" id="CLU_095255_1_0_6"/>
<dbReference type="Proteomes" id="UP000000538">
    <property type="component" value="Chromosome"/>
</dbReference>
<dbReference type="GO" id="GO:0005886">
    <property type="term" value="C:plasma membrane"/>
    <property type="evidence" value="ECO:0007669"/>
    <property type="project" value="UniProtKB-SubCell"/>
</dbReference>
<dbReference type="GO" id="GO:0022900">
    <property type="term" value="P:electron transport chain"/>
    <property type="evidence" value="ECO:0007669"/>
    <property type="project" value="UniProtKB-UniRule"/>
</dbReference>
<dbReference type="HAMAP" id="MF_00459">
    <property type="entry name" value="RsxA_RnfA"/>
    <property type="match status" value="1"/>
</dbReference>
<dbReference type="InterPro" id="IPR011293">
    <property type="entry name" value="Ion_transpt_RnfA/RsxA"/>
</dbReference>
<dbReference type="InterPro" id="IPR003667">
    <property type="entry name" value="NqrDE/RnfAE"/>
</dbReference>
<dbReference type="InterPro" id="IPR050133">
    <property type="entry name" value="NqrDE/RnfAE_oxidrdctase"/>
</dbReference>
<dbReference type="NCBIfam" id="NF003481">
    <property type="entry name" value="PRK05151.1"/>
    <property type="match status" value="1"/>
</dbReference>
<dbReference type="NCBIfam" id="TIGR01943">
    <property type="entry name" value="rnfA"/>
    <property type="match status" value="1"/>
</dbReference>
<dbReference type="PANTHER" id="PTHR30335">
    <property type="entry name" value="INTEGRAL MEMBRANE PROTEIN OF SOXR-REDUCING COMPLEX"/>
    <property type="match status" value="1"/>
</dbReference>
<dbReference type="PANTHER" id="PTHR30335:SF0">
    <property type="entry name" value="ION-TRANSLOCATING OXIDOREDUCTASE COMPLEX SUBUNIT A"/>
    <property type="match status" value="1"/>
</dbReference>
<dbReference type="Pfam" id="PF02508">
    <property type="entry name" value="Rnf-Nqr"/>
    <property type="match status" value="1"/>
</dbReference>
<dbReference type="PIRSF" id="PIRSF006102">
    <property type="entry name" value="NQR_DE"/>
    <property type="match status" value="1"/>
</dbReference>
<proteinExistence type="inferred from homology"/>
<gene>
    <name evidence="1" type="primary">rsxA</name>
    <name type="synonym">rnfA</name>
    <name type="ordered locus">SCH_1477</name>
</gene>
<protein>
    <recommendedName>
        <fullName evidence="1">Ion-translocating oxidoreductase complex subunit A</fullName>
        <ecNumber evidence="1">7.-.-.-</ecNumber>
    </recommendedName>
    <alternativeName>
        <fullName evidence="1">Rsx electron transport complex subunit A</fullName>
    </alternativeName>
</protein>
<sequence length="193" mass="20893">MTDYLLLFVGTVLVNNFVLVKFLGLCPFMGVSKKLETAMGMGLATTFVMTLASICAWLIDTWILIPLDLIYLRTLAFILVIAVVVQFTEMVVRKTSPALYRLLGIFLPLITTNCAVLGVALLNINLGHHFLQSALYGFSAAVGFSLVMVLFAAIRERLAVADVPAPFRGNAIALITAGLMSLAFMGFSGLVKL</sequence>
<name>RSXA_SALCH</name>
<accession>Q57PH8</accession>
<organism>
    <name type="scientific">Salmonella choleraesuis (strain SC-B67)</name>
    <dbReference type="NCBI Taxonomy" id="321314"/>
    <lineage>
        <taxon>Bacteria</taxon>
        <taxon>Pseudomonadati</taxon>
        <taxon>Pseudomonadota</taxon>
        <taxon>Gammaproteobacteria</taxon>
        <taxon>Enterobacterales</taxon>
        <taxon>Enterobacteriaceae</taxon>
        <taxon>Salmonella</taxon>
    </lineage>
</organism>
<comment type="function">
    <text evidence="1">Part of a membrane-bound complex that couples electron transfer with translocation of ions across the membrane. Required to maintain the reduced state of SoxR.</text>
</comment>
<comment type="subunit">
    <text evidence="1">The complex is composed of six subunits: RsxA, RsxB, RsxC, RsxD, RsxE and RsxG.</text>
</comment>
<comment type="subcellular location">
    <subcellularLocation>
        <location evidence="1">Cell inner membrane</location>
        <topology evidence="1">Multi-pass membrane protein</topology>
    </subcellularLocation>
</comment>
<comment type="similarity">
    <text evidence="1">Belongs to the NqrDE/RnfAE family.</text>
</comment>
<keyword id="KW-0997">Cell inner membrane</keyword>
<keyword id="KW-1003">Cell membrane</keyword>
<keyword id="KW-0249">Electron transport</keyword>
<keyword id="KW-0472">Membrane</keyword>
<keyword id="KW-1278">Translocase</keyword>
<keyword id="KW-0812">Transmembrane</keyword>
<keyword id="KW-1133">Transmembrane helix</keyword>
<keyword id="KW-0813">Transport</keyword>